<name>INHBA_RAT</name>
<evidence type="ECO:0000250" key="1"/>
<evidence type="ECO:0000250" key="2">
    <source>
        <dbReference type="UniProtKB" id="P08476"/>
    </source>
</evidence>
<evidence type="ECO:0000255" key="3"/>
<evidence type="ECO:0000256" key="4">
    <source>
        <dbReference type="SAM" id="MobiDB-lite"/>
    </source>
</evidence>
<evidence type="ECO:0000305" key="5"/>
<dbReference type="EMBL" id="M37482">
    <property type="protein sequence ID" value="AAA41436.1"/>
    <property type="molecule type" value="mRNA"/>
</dbReference>
<dbReference type="PIR" id="B40905">
    <property type="entry name" value="B40905"/>
</dbReference>
<dbReference type="RefSeq" id="NP_058824.1">
    <property type="nucleotide sequence ID" value="NM_017128.2"/>
</dbReference>
<dbReference type="RefSeq" id="XP_006254063.1">
    <property type="nucleotide sequence ID" value="XM_006254001.5"/>
</dbReference>
<dbReference type="RefSeq" id="XP_008769934.1">
    <property type="nucleotide sequence ID" value="XM_008771712.4"/>
</dbReference>
<dbReference type="RefSeq" id="XP_008769935.1">
    <property type="nucleotide sequence ID" value="XM_008771713.2"/>
</dbReference>
<dbReference type="RefSeq" id="XP_008769936.1">
    <property type="nucleotide sequence ID" value="XM_008771714.2"/>
</dbReference>
<dbReference type="RefSeq" id="XP_008769937.1">
    <property type="nucleotide sequence ID" value="XM_008771715.2"/>
</dbReference>
<dbReference type="RefSeq" id="XP_008769938.1">
    <property type="nucleotide sequence ID" value="XM_008771716.2"/>
</dbReference>
<dbReference type="RefSeq" id="XP_063132356.1">
    <property type="nucleotide sequence ID" value="XM_063276286.1"/>
</dbReference>
<dbReference type="RefSeq" id="XP_063132357.1">
    <property type="nucleotide sequence ID" value="XM_063276287.1"/>
</dbReference>
<dbReference type="SMR" id="P18331"/>
<dbReference type="FunCoup" id="P18331">
    <property type="interactions" value="214"/>
</dbReference>
<dbReference type="STRING" id="10116.ENSRNOP00000019272"/>
<dbReference type="GlyCosmos" id="P18331">
    <property type="glycosylation" value="1 site, No reported glycans"/>
</dbReference>
<dbReference type="GlyGen" id="P18331">
    <property type="glycosylation" value="2 sites"/>
</dbReference>
<dbReference type="iPTMnet" id="P18331"/>
<dbReference type="PhosphoSitePlus" id="P18331"/>
<dbReference type="PaxDb" id="10116-ENSRNOP00000019272"/>
<dbReference type="Ensembl" id="ENSRNOT00000019272.6">
    <property type="protein sequence ID" value="ENSRNOP00000019272.2"/>
    <property type="gene ID" value="ENSRNOG00000014320.6"/>
</dbReference>
<dbReference type="GeneID" id="29200"/>
<dbReference type="KEGG" id="rno:29200"/>
<dbReference type="UCSC" id="RGD:62074">
    <property type="organism name" value="rat"/>
</dbReference>
<dbReference type="AGR" id="RGD:62074"/>
<dbReference type="CTD" id="3624"/>
<dbReference type="RGD" id="62074">
    <property type="gene designation" value="Inhba"/>
</dbReference>
<dbReference type="eggNOG" id="KOG3900">
    <property type="taxonomic scope" value="Eukaryota"/>
</dbReference>
<dbReference type="GeneTree" id="ENSGT00940000157116"/>
<dbReference type="HOGENOM" id="CLU_020515_5_1_1"/>
<dbReference type="InParanoid" id="P18331"/>
<dbReference type="OMA" id="HACCKRQ"/>
<dbReference type="OrthoDB" id="6516235at2759"/>
<dbReference type="PhylomeDB" id="P18331"/>
<dbReference type="TreeFam" id="TF351791"/>
<dbReference type="Reactome" id="R-RNO-1502540">
    <property type="pathway name" value="Signaling by Activin"/>
</dbReference>
<dbReference type="Reactome" id="R-RNO-201451">
    <property type="pathway name" value="Signaling by BMP"/>
</dbReference>
<dbReference type="Reactome" id="R-RNO-209822">
    <property type="pathway name" value="Glycoprotein hormones"/>
</dbReference>
<dbReference type="Reactome" id="R-RNO-2473224">
    <property type="pathway name" value="Antagonism of Activin by Follistatin"/>
</dbReference>
<dbReference type="Reactome" id="R-RNO-9839406">
    <property type="pathway name" value="TGFBR3 regulates activin signaling"/>
</dbReference>
<dbReference type="PRO" id="PR:P18331"/>
<dbReference type="Proteomes" id="UP000002494">
    <property type="component" value="Chromosome 17"/>
</dbReference>
<dbReference type="Bgee" id="ENSRNOG00000014320">
    <property type="expression patterns" value="Expressed in ovary and 13 other cell types or tissues"/>
</dbReference>
<dbReference type="GO" id="GO:0043509">
    <property type="term" value="C:activin A complex"/>
    <property type="evidence" value="ECO:0000250"/>
    <property type="project" value="UniProtKB"/>
</dbReference>
<dbReference type="GO" id="GO:0150005">
    <property type="term" value="C:enzyme activator complex"/>
    <property type="evidence" value="ECO:0000266"/>
    <property type="project" value="RGD"/>
</dbReference>
<dbReference type="GO" id="GO:0005576">
    <property type="term" value="C:extracellular region"/>
    <property type="evidence" value="ECO:0000250"/>
    <property type="project" value="UniProtKB"/>
</dbReference>
<dbReference type="GO" id="GO:0005615">
    <property type="term" value="C:extracellular space"/>
    <property type="evidence" value="ECO:0000314"/>
    <property type="project" value="RGD"/>
</dbReference>
<dbReference type="GO" id="GO:0043512">
    <property type="term" value="C:inhibin A complex"/>
    <property type="evidence" value="ECO:0000314"/>
    <property type="project" value="RGD"/>
</dbReference>
<dbReference type="GO" id="GO:0048471">
    <property type="term" value="C:perinuclear region of cytoplasm"/>
    <property type="evidence" value="ECO:0000266"/>
    <property type="project" value="RGD"/>
</dbReference>
<dbReference type="GO" id="GO:0005125">
    <property type="term" value="F:cytokine activity"/>
    <property type="evidence" value="ECO:0000250"/>
    <property type="project" value="UniProtKB"/>
</dbReference>
<dbReference type="GO" id="GO:0008083">
    <property type="term" value="F:growth factor activity"/>
    <property type="evidence" value="ECO:0007669"/>
    <property type="project" value="UniProtKB-KW"/>
</dbReference>
<dbReference type="GO" id="GO:0005179">
    <property type="term" value="F:hormone activity"/>
    <property type="evidence" value="ECO:0007669"/>
    <property type="project" value="UniProtKB-KW"/>
</dbReference>
<dbReference type="GO" id="GO:0042802">
    <property type="term" value="F:identical protein binding"/>
    <property type="evidence" value="ECO:0000266"/>
    <property type="project" value="RGD"/>
</dbReference>
<dbReference type="GO" id="GO:0017046">
    <property type="term" value="F:peptide hormone binding"/>
    <property type="evidence" value="ECO:0000266"/>
    <property type="project" value="RGD"/>
</dbReference>
<dbReference type="GO" id="GO:0044877">
    <property type="term" value="F:protein-containing complex binding"/>
    <property type="evidence" value="ECO:0000314"/>
    <property type="project" value="RGD"/>
</dbReference>
<dbReference type="GO" id="GO:0005102">
    <property type="term" value="F:signaling receptor binding"/>
    <property type="evidence" value="ECO:0000266"/>
    <property type="project" value="RGD"/>
</dbReference>
<dbReference type="GO" id="GO:0070699">
    <property type="term" value="F:type II activin receptor binding"/>
    <property type="evidence" value="ECO:0000266"/>
    <property type="project" value="RGD"/>
</dbReference>
<dbReference type="GO" id="GO:0032924">
    <property type="term" value="P:activin receptor signaling pathway"/>
    <property type="evidence" value="ECO:0000250"/>
    <property type="project" value="UniProtKB"/>
</dbReference>
<dbReference type="GO" id="GO:0008209">
    <property type="term" value="P:androgen metabolic process"/>
    <property type="evidence" value="ECO:0000266"/>
    <property type="project" value="RGD"/>
</dbReference>
<dbReference type="GO" id="GO:1903449">
    <property type="term" value="P:androst-4-ene-3,17-dione biosynthetic process"/>
    <property type="evidence" value="ECO:0000266"/>
    <property type="project" value="RGD"/>
</dbReference>
<dbReference type="GO" id="GO:0006914">
    <property type="term" value="P:autophagy"/>
    <property type="evidence" value="ECO:0000314"/>
    <property type="project" value="RGD"/>
</dbReference>
<dbReference type="GO" id="GO:0060936">
    <property type="term" value="P:cardiac fibroblast cell development"/>
    <property type="evidence" value="ECO:0000314"/>
    <property type="project" value="RGD"/>
</dbReference>
<dbReference type="GO" id="GO:1904385">
    <property type="term" value="P:cellular response to angiotensin"/>
    <property type="evidence" value="ECO:0000270"/>
    <property type="project" value="RGD"/>
</dbReference>
<dbReference type="GO" id="GO:0071397">
    <property type="term" value="P:cellular response to cholesterol"/>
    <property type="evidence" value="ECO:0000314"/>
    <property type="project" value="UniProtKB"/>
</dbReference>
<dbReference type="GO" id="GO:0071372">
    <property type="term" value="P:cellular response to follicle-stimulating hormone stimulus"/>
    <property type="evidence" value="ECO:0000314"/>
    <property type="project" value="UniProtKB"/>
</dbReference>
<dbReference type="GO" id="GO:0071456">
    <property type="term" value="P:cellular response to hypoxia"/>
    <property type="evidence" value="ECO:0000270"/>
    <property type="project" value="RGD"/>
</dbReference>
<dbReference type="GO" id="GO:0090650">
    <property type="term" value="P:cellular response to oxygen-glucose deprivation"/>
    <property type="evidence" value="ECO:0000270"/>
    <property type="project" value="RGD"/>
</dbReference>
<dbReference type="GO" id="GO:0019221">
    <property type="term" value="P:cytokine-mediated signaling pathway"/>
    <property type="evidence" value="ECO:0000270"/>
    <property type="project" value="RGD"/>
</dbReference>
<dbReference type="GO" id="GO:0035987">
    <property type="term" value="P:endodermal cell differentiation"/>
    <property type="evidence" value="ECO:0000266"/>
    <property type="project" value="RGD"/>
</dbReference>
<dbReference type="GO" id="GO:0097191">
    <property type="term" value="P:extrinsic apoptotic signaling pathway"/>
    <property type="evidence" value="ECO:0000266"/>
    <property type="project" value="RGD"/>
</dbReference>
<dbReference type="GO" id="GO:0061029">
    <property type="term" value="P:eyelid development in camera-type eye"/>
    <property type="evidence" value="ECO:0000250"/>
    <property type="project" value="UniProtKB"/>
</dbReference>
<dbReference type="GO" id="GO:0097154">
    <property type="term" value="P:GABAergic neuron differentiation"/>
    <property type="evidence" value="ECO:0000266"/>
    <property type="project" value="RGD"/>
</dbReference>
<dbReference type="GO" id="GO:0010467">
    <property type="term" value="P:gene expression"/>
    <property type="evidence" value="ECO:0000266"/>
    <property type="project" value="RGD"/>
</dbReference>
<dbReference type="GO" id="GO:0001942">
    <property type="term" value="P:hair follicle development"/>
    <property type="evidence" value="ECO:0000250"/>
    <property type="project" value="UniProtKB"/>
</dbReference>
<dbReference type="GO" id="GO:0002244">
    <property type="term" value="P:hematopoietic progenitor cell differentiation"/>
    <property type="evidence" value="ECO:0000250"/>
    <property type="project" value="UniProtKB"/>
</dbReference>
<dbReference type="GO" id="GO:0042541">
    <property type="term" value="P:hemoglobin biosynthetic process"/>
    <property type="evidence" value="ECO:0000250"/>
    <property type="project" value="UniProtKB"/>
</dbReference>
<dbReference type="GO" id="GO:0006629">
    <property type="term" value="P:lipid metabolic process"/>
    <property type="evidence" value="ECO:0000266"/>
    <property type="project" value="RGD"/>
</dbReference>
<dbReference type="GO" id="GO:0008584">
    <property type="term" value="P:male gonad development"/>
    <property type="evidence" value="ECO:0000250"/>
    <property type="project" value="UniProtKB"/>
</dbReference>
<dbReference type="GO" id="GO:0001707">
    <property type="term" value="P:mesoderm formation"/>
    <property type="evidence" value="ECO:0000266"/>
    <property type="project" value="RGD"/>
</dbReference>
<dbReference type="GO" id="GO:0048333">
    <property type="term" value="P:mesodermal cell differentiation"/>
    <property type="evidence" value="ECO:0000266"/>
    <property type="project" value="RGD"/>
</dbReference>
<dbReference type="GO" id="GO:0030308">
    <property type="term" value="P:negative regulation of cell growth"/>
    <property type="evidence" value="ECO:0000250"/>
    <property type="project" value="UniProtKB"/>
</dbReference>
<dbReference type="GO" id="GO:0008285">
    <property type="term" value="P:negative regulation of cell population proliferation"/>
    <property type="evidence" value="ECO:0000250"/>
    <property type="project" value="UniProtKB"/>
</dbReference>
<dbReference type="GO" id="GO:2000134">
    <property type="term" value="P:negative regulation of G1/S transition of mitotic cell cycle"/>
    <property type="evidence" value="ECO:0000250"/>
    <property type="project" value="UniProtKB"/>
</dbReference>
<dbReference type="GO" id="GO:0051799">
    <property type="term" value="P:negative regulation of hair follicle development"/>
    <property type="evidence" value="ECO:0000266"/>
    <property type="project" value="RGD"/>
</dbReference>
<dbReference type="GO" id="GO:0042476">
    <property type="term" value="P:odontogenesis"/>
    <property type="evidence" value="ECO:0000250"/>
    <property type="project" value="UniProtKB"/>
</dbReference>
<dbReference type="GO" id="GO:0001541">
    <property type="term" value="P:ovarian follicle development"/>
    <property type="evidence" value="ECO:0000250"/>
    <property type="project" value="UniProtKB"/>
</dbReference>
<dbReference type="GO" id="GO:0032967">
    <property type="term" value="P:positive regulation of collagen biosynthetic process"/>
    <property type="evidence" value="ECO:0000314"/>
    <property type="project" value="RGD"/>
</dbReference>
<dbReference type="GO" id="GO:0045893">
    <property type="term" value="P:positive regulation of DNA-templated transcription"/>
    <property type="evidence" value="ECO:0000250"/>
    <property type="project" value="UniProtKB"/>
</dbReference>
<dbReference type="GO" id="GO:0070374">
    <property type="term" value="P:positive regulation of ERK1 and ERK2 cascade"/>
    <property type="evidence" value="ECO:0000314"/>
    <property type="project" value="RGD"/>
</dbReference>
<dbReference type="GO" id="GO:0045648">
    <property type="term" value="P:positive regulation of erythrocyte differentiation"/>
    <property type="evidence" value="ECO:0000250"/>
    <property type="project" value="UniProtKB"/>
</dbReference>
<dbReference type="GO" id="GO:2001241">
    <property type="term" value="P:positive regulation of extrinsic apoptotic signaling pathway in absence of ligand"/>
    <property type="evidence" value="ECO:0000250"/>
    <property type="project" value="UniProtKB"/>
</dbReference>
<dbReference type="GO" id="GO:0010628">
    <property type="term" value="P:positive regulation of gene expression"/>
    <property type="evidence" value="ECO:0000266"/>
    <property type="project" value="RGD"/>
</dbReference>
<dbReference type="GO" id="GO:0060279">
    <property type="term" value="P:positive regulation of ovulation"/>
    <property type="evidence" value="ECO:0000250"/>
    <property type="project" value="UniProtKB"/>
</dbReference>
<dbReference type="GO" id="GO:0051247">
    <property type="term" value="P:positive regulation of protein metabolic process"/>
    <property type="evidence" value="ECO:0000266"/>
    <property type="project" value="RGD"/>
</dbReference>
<dbReference type="GO" id="GO:0060391">
    <property type="term" value="P:positive regulation of SMAD protein signal transduction"/>
    <property type="evidence" value="ECO:0000266"/>
    <property type="project" value="RGD"/>
</dbReference>
<dbReference type="GO" id="GO:0045944">
    <property type="term" value="P:positive regulation of transcription by RNA polymerase II"/>
    <property type="evidence" value="ECO:0000314"/>
    <property type="project" value="RGD"/>
</dbReference>
<dbReference type="GO" id="GO:0045945">
    <property type="term" value="P:positive regulation of transcription by RNA polymerase III"/>
    <property type="evidence" value="ECO:0000270"/>
    <property type="project" value="RGD"/>
</dbReference>
<dbReference type="GO" id="GO:0042701">
    <property type="term" value="P:progesterone secretion"/>
    <property type="evidence" value="ECO:0000250"/>
    <property type="project" value="UniProtKB"/>
</dbReference>
<dbReference type="GO" id="GO:0046880">
    <property type="term" value="P:regulation of follicle-stimulating hormone secretion"/>
    <property type="evidence" value="ECO:0000250"/>
    <property type="project" value="UniProtKB"/>
</dbReference>
<dbReference type="GO" id="GO:0006357">
    <property type="term" value="P:regulation of transcription by RNA polymerase II"/>
    <property type="evidence" value="ECO:0000250"/>
    <property type="project" value="UniProtKB"/>
</dbReference>
<dbReference type="GO" id="GO:1904044">
    <property type="term" value="P:response to aldosterone"/>
    <property type="evidence" value="ECO:0000270"/>
    <property type="project" value="RGD"/>
</dbReference>
<dbReference type="GO" id="GO:0060021">
    <property type="term" value="P:roof of mouth development"/>
    <property type="evidence" value="ECO:0000250"/>
    <property type="project" value="UniProtKB"/>
</dbReference>
<dbReference type="GO" id="GO:0060008">
    <property type="term" value="P:Sertoli cell differentiation"/>
    <property type="evidence" value="ECO:0000266"/>
    <property type="project" value="RGD"/>
</dbReference>
<dbReference type="GO" id="GO:0060395">
    <property type="term" value="P:SMAD protein signal transduction"/>
    <property type="evidence" value="ECO:0000314"/>
    <property type="project" value="RGD"/>
</dbReference>
<dbReference type="GO" id="GO:0006694">
    <property type="term" value="P:steroid biosynthetic process"/>
    <property type="evidence" value="ECO:0000266"/>
    <property type="project" value="RGD"/>
</dbReference>
<dbReference type="GO" id="GO:0008202">
    <property type="term" value="P:steroid metabolic process"/>
    <property type="evidence" value="ECO:0000266"/>
    <property type="project" value="RGD"/>
</dbReference>
<dbReference type="GO" id="GO:0021773">
    <property type="term" value="P:striatal medium spiny neuron differentiation"/>
    <property type="evidence" value="ECO:0000266"/>
    <property type="project" value="RGD"/>
</dbReference>
<dbReference type="GO" id="GO:0061370">
    <property type="term" value="P:testosterone biosynthetic process"/>
    <property type="evidence" value="ECO:0000266"/>
    <property type="project" value="RGD"/>
</dbReference>
<dbReference type="GO" id="GO:0006366">
    <property type="term" value="P:transcription by RNA polymerase II"/>
    <property type="evidence" value="ECO:0000266"/>
    <property type="project" value="RGD"/>
</dbReference>
<dbReference type="CDD" id="cd19404">
    <property type="entry name" value="TGF_beta_INHBA"/>
    <property type="match status" value="1"/>
</dbReference>
<dbReference type="FunFam" id="2.10.90.10:FF:000005">
    <property type="entry name" value="Inhibin beta A chain"/>
    <property type="match status" value="1"/>
</dbReference>
<dbReference type="FunFam" id="2.60.120.970:FF:000007">
    <property type="entry name" value="Inhibin beta A chain"/>
    <property type="match status" value="1"/>
</dbReference>
<dbReference type="Gene3D" id="2.60.120.970">
    <property type="match status" value="1"/>
</dbReference>
<dbReference type="Gene3D" id="2.10.90.10">
    <property type="entry name" value="Cystine-knot cytokines"/>
    <property type="match status" value="1"/>
</dbReference>
<dbReference type="InterPro" id="IPR029034">
    <property type="entry name" value="Cystine-knot_cytokine"/>
</dbReference>
<dbReference type="InterPro" id="IPR000491">
    <property type="entry name" value="Inhibin_betaA"/>
</dbReference>
<dbReference type="InterPro" id="IPR001839">
    <property type="entry name" value="TGF-b_C"/>
</dbReference>
<dbReference type="InterPro" id="IPR001111">
    <property type="entry name" value="TGF-b_propeptide"/>
</dbReference>
<dbReference type="InterPro" id="IPR015615">
    <property type="entry name" value="TGF-beta-rel"/>
</dbReference>
<dbReference type="InterPro" id="IPR017948">
    <property type="entry name" value="TGFb_CS"/>
</dbReference>
<dbReference type="PANTHER" id="PTHR11848:SF133">
    <property type="entry name" value="INHIBIN BETA A CHAIN"/>
    <property type="match status" value="1"/>
</dbReference>
<dbReference type="PANTHER" id="PTHR11848">
    <property type="entry name" value="TGF-BETA FAMILY"/>
    <property type="match status" value="1"/>
</dbReference>
<dbReference type="Pfam" id="PF00019">
    <property type="entry name" value="TGF_beta"/>
    <property type="match status" value="1"/>
</dbReference>
<dbReference type="Pfam" id="PF00688">
    <property type="entry name" value="TGFb_propeptide"/>
    <property type="match status" value="1"/>
</dbReference>
<dbReference type="PRINTS" id="PR00670">
    <property type="entry name" value="INHIBINBA"/>
</dbReference>
<dbReference type="SMART" id="SM00204">
    <property type="entry name" value="TGFB"/>
    <property type="match status" value="1"/>
</dbReference>
<dbReference type="SUPFAM" id="SSF57501">
    <property type="entry name" value="Cystine-knot cytokines"/>
    <property type="match status" value="1"/>
</dbReference>
<dbReference type="PROSITE" id="PS00250">
    <property type="entry name" value="TGF_BETA_1"/>
    <property type="match status" value="1"/>
</dbReference>
<dbReference type="PROSITE" id="PS51362">
    <property type="entry name" value="TGF_BETA_2"/>
    <property type="match status" value="1"/>
</dbReference>
<gene>
    <name type="primary">Inhba</name>
</gene>
<comment type="function">
    <text evidence="2">Inhibins/activins are involved in regulating a number of diverse functions such as hypothalamic and pituitary hormone secretion, gonadal hormone secretion, germ cell development and maturation, erythroid differentiation, insulin secretion, nerve cell survival, embryonic axial development or bone growth, depending on their subunit composition.</text>
</comment>
<comment type="function">
    <text evidence="2">Activin A is a homodimer of INHBA that plays a role in several essential biological processes including embryonic development, stem cell maintenance and differentiation, haematopoiesis, cell proliferation and tissue fibrosis. Signals through type I (such as ACVR1B or ACVR1C) and type II receptors (such as ACVR2A, ACVR2B or BMPR2) which, upon ligand binding, phosphorylate SMAD2 and SMAD3 intracellular signaling mediators that form a complex with SMAD4, translocate to the nucleus and modulate gene expression. Can also activate alternative non-canonical intracellular signaling pathways including the p38 MAPK, extracellular signal-regulated kinases 1/2 (ERK1/2) and c-Jun N-terminal kinases (JNKs) to modulate cell migration and differentiation. Alternatively, promotes osteoblastic differentiation via ACVRL1-SMAD1/5/9 pathway. In addition, can engage the type I receptor ACVR1 to form an ACVR1-activin A-type II receptor non-signaling complex (NSC) that renders receptors unavailable for engagement with BMPs, hence resulting in an apparent inhibition of ACVR1-mediated BMP signaling.</text>
</comment>
<comment type="function">
    <text evidence="2">Inhibin A is a dimer of alpha/INHA and beta-A/INHBA that functions as a feedback regulator in the hypothalamic-pituitary-gonadal (HPG) axis. Inhibits the secretion of FSH from the anterior pituitary gland by acting on pituitary gonadotrope cells. Antagonizes activin A by binding to the proteoglycan, betaglycan, and forming a stable complex with and, thereby, sequestering type II activin receptors while excluding type I receptor.</text>
</comment>
<comment type="subunit">
    <text evidence="2">Dimeric, linked by one or more disulfide bonds. Inhibin A is a dimer of alpha/INHA and beta-A/INHBA. Activin A is a homodimer of beta-A/INHBA. Activin AB is a dimer of beta-A/INHBA and beta-B/INHBB. Interacts with FST and FSTL3; these interactions prevent activin A interaction to its type II receptor. Activin A interacts with ACVR2A. Activin A interacts with BMPR2. Inhibin A interacts with ACVR1; this interaction creates a non-signaling complex (NSC) that inhibits ACVR1-mediated BMP signaling. Inhibin A interacts with ACVR2A.</text>
</comment>
<comment type="subcellular location">
    <subcellularLocation>
        <location evidence="2">Secreted</location>
    </subcellularLocation>
</comment>
<comment type="similarity">
    <text evidence="5">Belongs to the TGF-beta family.</text>
</comment>
<reference key="1">
    <citation type="journal article" date="1987" name="Mol. Endocrinol.">
        <title>Rat inhibin: molecular cloning of alpha- and beta-subunit complementary deoxyribonucleic acids and expression in the ovary.</title>
        <authorList>
            <person name="Woodruff T.K."/>
            <person name="Meunier H."/>
            <person name="Jones P.B.C."/>
            <person name="Hsueh A.J.W."/>
            <person name="Mayo K.E."/>
        </authorList>
    </citation>
    <scope>NUCLEOTIDE SEQUENCE [MRNA]</scope>
</reference>
<reference key="2">
    <citation type="journal article" date="1986" name="Science">
        <title>Inhibin-mediated feedback control of follicle-stimulating hormone secretion in the female rat.</title>
        <authorList>
            <person name="Rivier C."/>
            <person name="Rivier J."/>
            <person name="Vale W."/>
        </authorList>
    </citation>
    <scope>FUNCTION</scope>
</reference>
<reference key="3">
    <citation type="journal article" date="2009" name="Mol. Cell. Endocrinol.">
        <title>Inhibin A inhibits follicle-stimulating hormone (FSH) action by suppressing its receptor expression in cultured rat granulosa cells.</title>
        <authorList>
            <person name="Lu C."/>
            <person name="Yang W."/>
            <person name="Chen M."/>
            <person name="Liu T."/>
            <person name="Yang J."/>
            <person name="Tan P."/>
            <person name="Li L."/>
            <person name="Hu X."/>
            <person name="Fan C."/>
            <person name="Hu Z."/>
            <person name="Liu Y."/>
        </authorList>
    </citation>
    <scope>FUNCTION</scope>
</reference>
<organism>
    <name type="scientific">Rattus norvegicus</name>
    <name type="common">Rat</name>
    <dbReference type="NCBI Taxonomy" id="10116"/>
    <lineage>
        <taxon>Eukaryota</taxon>
        <taxon>Metazoa</taxon>
        <taxon>Chordata</taxon>
        <taxon>Craniata</taxon>
        <taxon>Vertebrata</taxon>
        <taxon>Euteleostomi</taxon>
        <taxon>Mammalia</taxon>
        <taxon>Eutheria</taxon>
        <taxon>Euarchontoglires</taxon>
        <taxon>Glires</taxon>
        <taxon>Rodentia</taxon>
        <taxon>Myomorpha</taxon>
        <taxon>Muroidea</taxon>
        <taxon>Muridae</taxon>
        <taxon>Murinae</taxon>
        <taxon>Rattus</taxon>
    </lineage>
</organism>
<proteinExistence type="evidence at transcript level"/>
<keyword id="KW-0165">Cleavage on pair of basic residues</keyword>
<keyword id="KW-1015">Disulfide bond</keyword>
<keyword id="KW-0325">Glycoprotein</keyword>
<keyword id="KW-0339">Growth factor</keyword>
<keyword id="KW-0372">Hormone</keyword>
<keyword id="KW-1185">Reference proteome</keyword>
<keyword id="KW-0964">Secreted</keyword>
<keyword id="KW-0732">Signal</keyword>
<protein>
    <recommendedName>
        <fullName>Inhibin beta A chain</fullName>
    </recommendedName>
    <alternativeName>
        <fullName>Activin beta-A chain</fullName>
    </alternativeName>
</protein>
<accession>P18331</accession>
<feature type="signal peptide" evidence="1">
    <location>
        <begin position="1"/>
        <end position="20"/>
    </location>
</feature>
<feature type="propeptide" id="PRO_0000033714">
    <location>
        <begin position="21"/>
        <end position="308"/>
    </location>
</feature>
<feature type="chain" id="PRO_0000033715" description="Inhibin beta A chain">
    <location>
        <begin position="309"/>
        <end position="424"/>
    </location>
</feature>
<feature type="region of interest" description="Disordered" evidence="4">
    <location>
        <begin position="264"/>
        <end position="306"/>
    </location>
</feature>
<feature type="compositionally biased region" description="Basic and acidic residues" evidence="4">
    <location>
        <begin position="264"/>
        <end position="275"/>
    </location>
</feature>
<feature type="glycosylation site" description="N-linked (GlcNAc...) asparagine" evidence="3">
    <location>
        <position position="165"/>
    </location>
</feature>
<feature type="disulfide bond" evidence="1">
    <location>
        <begin position="312"/>
        <end position="320"/>
    </location>
</feature>
<feature type="disulfide bond" evidence="1">
    <location>
        <begin position="319"/>
        <end position="389"/>
    </location>
</feature>
<feature type="disulfide bond" evidence="1">
    <location>
        <begin position="348"/>
        <end position="421"/>
    </location>
</feature>
<feature type="disulfide bond" evidence="1">
    <location>
        <begin position="352"/>
        <end position="423"/>
    </location>
</feature>
<feature type="disulfide bond" description="Interchain" evidence="1">
    <location>
        <position position="388"/>
    </location>
</feature>
<sequence length="424" mass="47406">MPLLWLRGFLLASCWIIVRSSPTPGSEGHGAAPDCPSCALATLPKDGPNSQPEMVEAVKKHILNMLHLKKRPDVTQPVPKAALLNAIRKLHVGKVGENGYVEIEDDIGRRAEMNELMEQTSEIITFAESGTARKTLHFEISKEGSDLSVVERAEVWLFLKVPKANRTRTKVTIRLFQQQKHPQGSLDMGDEAEEMGLKGERSELLLSEKVVDARKSTWHIFPVSSSIQRLLDQGKSSLDVRIACEQCQESGASLVLLGKKKKKEVDGDGKKKDGSDGGLEEEKEQSHRPFLMLQARQSEDHPHRRRRRGLECDGKVNICCKKQFFVSFKDIGWNDWIIAPSGYHANYCEGECPSHIAGTSGSSLSFHSTVINHYRMRGHSPFANLKSCCVPTKLRPMSMLYYDDGQNIIKKDIQNMIVEECGCS</sequence>